<name>NDHJ_PELHO</name>
<geneLocation type="chloroplast"/>
<keyword id="KW-0150">Chloroplast</keyword>
<keyword id="KW-0472">Membrane</keyword>
<keyword id="KW-0520">NAD</keyword>
<keyword id="KW-0521">NADP</keyword>
<keyword id="KW-0934">Plastid</keyword>
<keyword id="KW-0618">Plastoquinone</keyword>
<keyword id="KW-0874">Quinone</keyword>
<keyword id="KW-0793">Thylakoid</keyword>
<keyword id="KW-1278">Translocase</keyword>
<keyword id="KW-0813">Transport</keyword>
<proteinExistence type="inferred from homology"/>
<organism>
    <name type="scientific">Pelargonium hortorum</name>
    <name type="common">Common geranium</name>
    <name type="synonym">Pelargonium inquinans x Pelargonium zonale</name>
    <dbReference type="NCBI Taxonomy" id="4031"/>
    <lineage>
        <taxon>Eukaryota</taxon>
        <taxon>Viridiplantae</taxon>
        <taxon>Streptophyta</taxon>
        <taxon>Embryophyta</taxon>
        <taxon>Tracheophyta</taxon>
        <taxon>Spermatophyta</taxon>
        <taxon>Magnoliopsida</taxon>
        <taxon>eudicotyledons</taxon>
        <taxon>Gunneridae</taxon>
        <taxon>Pentapetalae</taxon>
        <taxon>rosids</taxon>
        <taxon>malvids</taxon>
        <taxon>Geraniales</taxon>
        <taxon>Geraniaceae</taxon>
        <taxon>Pelargonium</taxon>
    </lineage>
</organism>
<evidence type="ECO:0000255" key="1">
    <source>
        <dbReference type="HAMAP-Rule" id="MF_01357"/>
    </source>
</evidence>
<sequence>MQGPLSAWLVKRRLVHRSLGFDYQGIETLEIKSEDWHSVAVILYVYGYNYLRSQCAYDVAPGGLLASVYHFTRIEYGIDQPEEVCIKVFLARSNPRIPSIFWVWKSADFQERESYDMLGISYDNHPRLKRILMPESWIGWPLRKDYIAPNFYEIQDAH</sequence>
<feature type="chain" id="PRO_0000358295" description="NAD(P)H-quinone oxidoreductase subunit J, chloroplastic">
    <location>
        <begin position="1"/>
        <end position="158"/>
    </location>
</feature>
<comment type="function">
    <text evidence="1">NDH shuttles electrons from NAD(P)H:plastoquinone, via FMN and iron-sulfur (Fe-S) centers, to quinones in the photosynthetic chain and possibly in a chloroplast respiratory chain. The immediate electron acceptor for the enzyme in this species is believed to be plastoquinone. Couples the redox reaction to proton translocation, and thus conserves the redox energy in a proton gradient.</text>
</comment>
<comment type="catalytic activity">
    <reaction evidence="1">
        <text>a plastoquinone + NADH + (n+1) H(+)(in) = a plastoquinol + NAD(+) + n H(+)(out)</text>
        <dbReference type="Rhea" id="RHEA:42608"/>
        <dbReference type="Rhea" id="RHEA-COMP:9561"/>
        <dbReference type="Rhea" id="RHEA-COMP:9562"/>
        <dbReference type="ChEBI" id="CHEBI:15378"/>
        <dbReference type="ChEBI" id="CHEBI:17757"/>
        <dbReference type="ChEBI" id="CHEBI:57540"/>
        <dbReference type="ChEBI" id="CHEBI:57945"/>
        <dbReference type="ChEBI" id="CHEBI:62192"/>
    </reaction>
</comment>
<comment type="catalytic activity">
    <reaction evidence="1">
        <text>a plastoquinone + NADPH + (n+1) H(+)(in) = a plastoquinol + NADP(+) + n H(+)(out)</text>
        <dbReference type="Rhea" id="RHEA:42612"/>
        <dbReference type="Rhea" id="RHEA-COMP:9561"/>
        <dbReference type="Rhea" id="RHEA-COMP:9562"/>
        <dbReference type="ChEBI" id="CHEBI:15378"/>
        <dbReference type="ChEBI" id="CHEBI:17757"/>
        <dbReference type="ChEBI" id="CHEBI:57783"/>
        <dbReference type="ChEBI" id="CHEBI:58349"/>
        <dbReference type="ChEBI" id="CHEBI:62192"/>
    </reaction>
</comment>
<comment type="subunit">
    <text evidence="1">NDH is composed of at least 16 different subunits, 5 of which are encoded in the nucleus.</text>
</comment>
<comment type="subcellular location">
    <subcellularLocation>
        <location evidence="1">Plastid</location>
        <location evidence="1">Chloroplast thylakoid membrane</location>
        <topology evidence="1">Peripheral membrane protein</topology>
        <orientation evidence="1">Stromal side</orientation>
    </subcellularLocation>
</comment>
<comment type="similarity">
    <text evidence="1">Belongs to the complex I 30 kDa subunit family.</text>
</comment>
<dbReference type="EC" id="7.1.1.-" evidence="1"/>
<dbReference type="EMBL" id="DQ897681">
    <property type="protein sequence ID" value="ABI17265.1"/>
    <property type="molecule type" value="Genomic_DNA"/>
</dbReference>
<dbReference type="RefSeq" id="YP_784074.1">
    <property type="nucleotide sequence ID" value="NC_008454.1"/>
</dbReference>
<dbReference type="SMR" id="Q06FV7"/>
<dbReference type="GeneID" id="4362893"/>
<dbReference type="GO" id="GO:0009535">
    <property type="term" value="C:chloroplast thylakoid membrane"/>
    <property type="evidence" value="ECO:0007669"/>
    <property type="project" value="UniProtKB-SubCell"/>
</dbReference>
<dbReference type="GO" id="GO:0008137">
    <property type="term" value="F:NADH dehydrogenase (ubiquinone) activity"/>
    <property type="evidence" value="ECO:0007669"/>
    <property type="project" value="InterPro"/>
</dbReference>
<dbReference type="GO" id="GO:0048038">
    <property type="term" value="F:quinone binding"/>
    <property type="evidence" value="ECO:0007669"/>
    <property type="project" value="UniProtKB-KW"/>
</dbReference>
<dbReference type="GO" id="GO:0019684">
    <property type="term" value="P:photosynthesis, light reaction"/>
    <property type="evidence" value="ECO:0007669"/>
    <property type="project" value="UniProtKB-UniRule"/>
</dbReference>
<dbReference type="FunFam" id="3.30.460.80:FF:000004">
    <property type="entry name" value="NAD(P)H-quinone oxidoreductase subunit J, chloroplastic"/>
    <property type="match status" value="1"/>
</dbReference>
<dbReference type="Gene3D" id="3.30.460.80">
    <property type="entry name" value="NADH:ubiquinone oxidoreductase, 30kDa subunit"/>
    <property type="match status" value="1"/>
</dbReference>
<dbReference type="HAMAP" id="MF_01357">
    <property type="entry name" value="NDH1_NuoC"/>
    <property type="match status" value="1"/>
</dbReference>
<dbReference type="InterPro" id="IPR010218">
    <property type="entry name" value="NADH_DH_suC"/>
</dbReference>
<dbReference type="InterPro" id="IPR037232">
    <property type="entry name" value="NADH_quin_OxRdtase_su_C/D-like"/>
</dbReference>
<dbReference type="InterPro" id="IPR001268">
    <property type="entry name" value="NADH_UbQ_OxRdtase_30kDa_su"/>
</dbReference>
<dbReference type="InterPro" id="IPR020396">
    <property type="entry name" value="NADH_UbQ_OxRdtase_CS"/>
</dbReference>
<dbReference type="NCBIfam" id="NF009141">
    <property type="entry name" value="PRK12494.1"/>
    <property type="match status" value="1"/>
</dbReference>
<dbReference type="PANTHER" id="PTHR10884:SF14">
    <property type="entry name" value="NADH DEHYDROGENASE [UBIQUINONE] IRON-SULFUR PROTEIN 3, MITOCHONDRIAL"/>
    <property type="match status" value="1"/>
</dbReference>
<dbReference type="PANTHER" id="PTHR10884">
    <property type="entry name" value="NADH DEHYDROGENASE UBIQUINONE IRON-SULFUR PROTEIN 3"/>
    <property type="match status" value="1"/>
</dbReference>
<dbReference type="Pfam" id="PF00329">
    <property type="entry name" value="Complex1_30kDa"/>
    <property type="match status" value="1"/>
</dbReference>
<dbReference type="SUPFAM" id="SSF143243">
    <property type="entry name" value="Nqo5-like"/>
    <property type="match status" value="1"/>
</dbReference>
<dbReference type="PROSITE" id="PS00542">
    <property type="entry name" value="COMPLEX1_30K"/>
    <property type="match status" value="1"/>
</dbReference>
<accession>Q06FV7</accession>
<protein>
    <recommendedName>
        <fullName evidence="1">NAD(P)H-quinone oxidoreductase subunit J, chloroplastic</fullName>
        <ecNumber evidence="1">7.1.1.-</ecNumber>
    </recommendedName>
    <alternativeName>
        <fullName>NAD(P)H dehydrogenase subunit J</fullName>
    </alternativeName>
    <alternativeName>
        <fullName evidence="1">NADH-plastoquinone oxidoreductase subunit J</fullName>
    </alternativeName>
</protein>
<reference key="1">
    <citation type="journal article" date="2006" name="Mol. Biol. Evol.">
        <title>The complete chloroplast genome sequence of Pelargonium x hortorum: organization and evolution of the largest and most highly rearranged chloroplast genome of land plants.</title>
        <authorList>
            <person name="Chumley T.W."/>
            <person name="Palmer J.D."/>
            <person name="Mower J.P."/>
            <person name="Fourcade H.M."/>
            <person name="Calie P.J."/>
            <person name="Boore J.L."/>
            <person name="Jansen R.K."/>
        </authorList>
    </citation>
    <scope>NUCLEOTIDE SEQUENCE [LARGE SCALE GENOMIC DNA]</scope>
    <source>
        <strain>cv. Ringo White</strain>
    </source>
</reference>
<gene>
    <name evidence="1" type="primary">ndhJ</name>
</gene>